<dbReference type="EMBL" id="AE000511">
    <property type="protein sequence ID" value="AAD08082.1"/>
    <property type="molecule type" value="Genomic_DNA"/>
</dbReference>
<dbReference type="EMBL" id="AF125197">
    <property type="protein sequence ID" value="AAD27688.1"/>
    <property type="molecule type" value="Genomic_DNA"/>
</dbReference>
<dbReference type="PIR" id="H64649">
    <property type="entry name" value="H64649"/>
</dbReference>
<dbReference type="RefSeq" id="NP_207830.1">
    <property type="nucleotide sequence ID" value="NC_000915.1"/>
</dbReference>
<dbReference type="RefSeq" id="WP_001207122.1">
    <property type="nucleotide sequence ID" value="NC_018939.1"/>
</dbReference>
<dbReference type="SMR" id="P56022"/>
<dbReference type="FunCoup" id="P56022">
    <property type="interactions" value="345"/>
</dbReference>
<dbReference type="IntAct" id="P56022">
    <property type="interactions" value="2"/>
</dbReference>
<dbReference type="STRING" id="85962.HP_1040"/>
<dbReference type="PaxDb" id="85962-C694_05380"/>
<dbReference type="EnsemblBacteria" id="AAD08082">
    <property type="protein sequence ID" value="AAD08082"/>
    <property type="gene ID" value="HP_1040"/>
</dbReference>
<dbReference type="KEGG" id="heo:C694_05380"/>
<dbReference type="KEGG" id="hpy:HP_1040"/>
<dbReference type="PATRIC" id="fig|85962.47.peg.1119"/>
<dbReference type="eggNOG" id="COG0184">
    <property type="taxonomic scope" value="Bacteria"/>
</dbReference>
<dbReference type="InParanoid" id="P56022"/>
<dbReference type="OrthoDB" id="9799262at2"/>
<dbReference type="PhylomeDB" id="P56022"/>
<dbReference type="Proteomes" id="UP000000429">
    <property type="component" value="Chromosome"/>
</dbReference>
<dbReference type="GO" id="GO:0022627">
    <property type="term" value="C:cytosolic small ribosomal subunit"/>
    <property type="evidence" value="ECO:0000318"/>
    <property type="project" value="GO_Central"/>
</dbReference>
<dbReference type="GO" id="GO:0019843">
    <property type="term" value="F:rRNA binding"/>
    <property type="evidence" value="ECO:0007669"/>
    <property type="project" value="UniProtKB-UniRule"/>
</dbReference>
<dbReference type="GO" id="GO:0003735">
    <property type="term" value="F:structural constituent of ribosome"/>
    <property type="evidence" value="ECO:0007669"/>
    <property type="project" value="InterPro"/>
</dbReference>
<dbReference type="GO" id="GO:0006412">
    <property type="term" value="P:translation"/>
    <property type="evidence" value="ECO:0007669"/>
    <property type="project" value="UniProtKB-UniRule"/>
</dbReference>
<dbReference type="CDD" id="cd00353">
    <property type="entry name" value="Ribosomal_S15p_S13e"/>
    <property type="match status" value="1"/>
</dbReference>
<dbReference type="FunFam" id="1.10.287.10:FF:000002">
    <property type="entry name" value="30S ribosomal protein S15"/>
    <property type="match status" value="1"/>
</dbReference>
<dbReference type="Gene3D" id="6.10.250.3130">
    <property type="match status" value="1"/>
</dbReference>
<dbReference type="Gene3D" id="1.10.287.10">
    <property type="entry name" value="S15/NS1, RNA-binding"/>
    <property type="match status" value="1"/>
</dbReference>
<dbReference type="HAMAP" id="MF_01343_B">
    <property type="entry name" value="Ribosomal_uS15_B"/>
    <property type="match status" value="1"/>
</dbReference>
<dbReference type="InterPro" id="IPR000589">
    <property type="entry name" value="Ribosomal_uS15"/>
</dbReference>
<dbReference type="InterPro" id="IPR005290">
    <property type="entry name" value="Ribosomal_uS15_bac-type"/>
</dbReference>
<dbReference type="InterPro" id="IPR009068">
    <property type="entry name" value="uS15_NS1_RNA-bd_sf"/>
</dbReference>
<dbReference type="NCBIfam" id="TIGR00952">
    <property type="entry name" value="S15_bact"/>
    <property type="match status" value="1"/>
</dbReference>
<dbReference type="PANTHER" id="PTHR23321">
    <property type="entry name" value="RIBOSOMAL PROTEIN S15, BACTERIAL AND ORGANELLAR"/>
    <property type="match status" value="1"/>
</dbReference>
<dbReference type="PANTHER" id="PTHR23321:SF26">
    <property type="entry name" value="SMALL RIBOSOMAL SUBUNIT PROTEIN US15M"/>
    <property type="match status" value="1"/>
</dbReference>
<dbReference type="Pfam" id="PF00312">
    <property type="entry name" value="Ribosomal_S15"/>
    <property type="match status" value="1"/>
</dbReference>
<dbReference type="SMART" id="SM01387">
    <property type="entry name" value="Ribosomal_S15"/>
    <property type="match status" value="1"/>
</dbReference>
<dbReference type="SUPFAM" id="SSF47060">
    <property type="entry name" value="S15/NS1 RNA-binding domain"/>
    <property type="match status" value="1"/>
</dbReference>
<dbReference type="PROSITE" id="PS00362">
    <property type="entry name" value="RIBOSOMAL_S15"/>
    <property type="match status" value="1"/>
</dbReference>
<organism>
    <name type="scientific">Helicobacter pylori (strain ATCC 700392 / 26695)</name>
    <name type="common">Campylobacter pylori</name>
    <dbReference type="NCBI Taxonomy" id="85962"/>
    <lineage>
        <taxon>Bacteria</taxon>
        <taxon>Pseudomonadati</taxon>
        <taxon>Campylobacterota</taxon>
        <taxon>Epsilonproteobacteria</taxon>
        <taxon>Campylobacterales</taxon>
        <taxon>Helicobacteraceae</taxon>
        <taxon>Helicobacter</taxon>
    </lineage>
</organism>
<protein>
    <recommendedName>
        <fullName evidence="1">Small ribosomal subunit protein uS15</fullName>
    </recommendedName>
    <alternativeName>
        <fullName evidence="2">30S ribosomal protein S15</fullName>
    </alternativeName>
</protein>
<comment type="function">
    <text evidence="1">One of the primary rRNA binding proteins, it binds directly to 16S rRNA where it helps nucleate assembly of the platform of the 30S subunit by binding and bridging several RNA helices of the 16S rRNA.</text>
</comment>
<comment type="function">
    <text evidence="1">Forms an intersubunit bridge (bridge B4) with the 23S rRNA of the 50S subunit in the ribosome.</text>
</comment>
<comment type="subunit">
    <text evidence="1">Part of the 30S ribosomal subunit. Forms a bridge to the 50S subunit in the 70S ribosome, contacting the 23S rRNA.</text>
</comment>
<comment type="similarity">
    <text evidence="1">Belongs to the universal ribosomal protein uS15 family.</text>
</comment>
<reference key="1">
    <citation type="journal article" date="1997" name="Nature">
        <title>The complete genome sequence of the gastric pathogen Helicobacter pylori.</title>
        <authorList>
            <person name="Tomb J.-F."/>
            <person name="White O."/>
            <person name="Kerlavage A.R."/>
            <person name="Clayton R.A."/>
            <person name="Sutton G.G."/>
            <person name="Fleischmann R.D."/>
            <person name="Ketchum K.A."/>
            <person name="Klenk H.-P."/>
            <person name="Gill S.R."/>
            <person name="Dougherty B.A."/>
            <person name="Nelson K.E."/>
            <person name="Quackenbush J."/>
            <person name="Zhou L."/>
            <person name="Kirkness E.F."/>
            <person name="Peterson S.N."/>
            <person name="Loftus B.J."/>
            <person name="Richardson D.L."/>
            <person name="Dodson R.J."/>
            <person name="Khalak H.G."/>
            <person name="Glodek A."/>
            <person name="McKenney K."/>
            <person name="FitzGerald L.M."/>
            <person name="Lee N."/>
            <person name="Adams M.D."/>
            <person name="Hickey E.K."/>
            <person name="Berg D.E."/>
            <person name="Gocayne J.D."/>
            <person name="Utterback T.R."/>
            <person name="Peterson J.D."/>
            <person name="Kelley J.M."/>
            <person name="Cotton M.D."/>
            <person name="Weidman J.F."/>
            <person name="Fujii C."/>
            <person name="Bowman C."/>
            <person name="Watthey L."/>
            <person name="Wallin E."/>
            <person name="Hayes W.S."/>
            <person name="Borodovsky M."/>
            <person name="Karp P.D."/>
            <person name="Smith H.O."/>
            <person name="Fraser C.M."/>
            <person name="Venter J.C."/>
        </authorList>
    </citation>
    <scope>NUCLEOTIDE SEQUENCE [LARGE SCALE GENOMIC DNA]</scope>
    <source>
        <strain>ATCC 700392 / 26695</strain>
    </source>
</reference>
<reference key="2">
    <citation type="journal article" date="1999" name="J. Bacteriol.">
        <title>Isolation of Helicobacter pylori genes that modulate urease activity.</title>
        <authorList>
            <person name="McGee D.J."/>
            <person name="May C.A."/>
            <person name="Garner R.M."/>
            <person name="Himpsl J.M."/>
            <person name="Mobley H.L.T."/>
        </authorList>
    </citation>
    <scope>NUCLEOTIDE SEQUENCE [GENOMIC DNA]</scope>
    <source>
        <strain>ATCC 43504</strain>
    </source>
</reference>
<evidence type="ECO:0000255" key="1">
    <source>
        <dbReference type="HAMAP-Rule" id="MF_01343"/>
    </source>
</evidence>
<evidence type="ECO:0000305" key="2"/>
<accession>P56022</accession>
<accession>Q9X5H2</accession>
<name>RS15_HELPY</name>
<proteinExistence type="inferred from homology"/>
<sequence length="90" mass="10390">MALNLEKKQEIIKAFATKENDTGSCEVQVALLNERIKLLTEHLKANPKDHSSRLGLLKLVAQRRNLLKYIKRTNHARYVVLIEKLGIKDR</sequence>
<keyword id="KW-1185">Reference proteome</keyword>
<keyword id="KW-0687">Ribonucleoprotein</keyword>
<keyword id="KW-0689">Ribosomal protein</keyword>
<keyword id="KW-0694">RNA-binding</keyword>
<keyword id="KW-0699">rRNA-binding</keyword>
<gene>
    <name evidence="1" type="primary">rpsO</name>
    <name type="ordered locus">HP_1040</name>
</gene>
<feature type="chain" id="PRO_0000115450" description="Small ribosomal subunit protein uS15">
    <location>
        <begin position="1"/>
        <end position="90"/>
    </location>
</feature>
<feature type="sequence variant" description="In strain: ATCC 43504.">
    <original>E</original>
    <variation>Q</variation>
    <location>
        <position position="19"/>
    </location>
</feature>
<feature type="sequence variant" description="In strain: ATCC 43504.">
    <original>K</original>
    <variation>R</variation>
    <location>
        <position position="37"/>
    </location>
</feature>
<feature type="sequence variant" description="In strain: ATCC 43504.">
    <original>N</original>
    <variation>D</variation>
    <location>
        <position position="74"/>
    </location>
</feature>